<keyword id="KW-1185">Reference proteome</keyword>
<reference key="1">
    <citation type="journal article" date="2005" name="Science">
        <title>The transcriptional landscape of the mammalian genome.</title>
        <authorList>
            <person name="Carninci P."/>
            <person name="Kasukawa T."/>
            <person name="Katayama S."/>
            <person name="Gough J."/>
            <person name="Frith M.C."/>
            <person name="Maeda N."/>
            <person name="Oyama R."/>
            <person name="Ravasi T."/>
            <person name="Lenhard B."/>
            <person name="Wells C."/>
            <person name="Kodzius R."/>
            <person name="Shimokawa K."/>
            <person name="Bajic V.B."/>
            <person name="Brenner S.E."/>
            <person name="Batalov S."/>
            <person name="Forrest A.R."/>
            <person name="Zavolan M."/>
            <person name="Davis M.J."/>
            <person name="Wilming L.G."/>
            <person name="Aidinis V."/>
            <person name="Allen J.E."/>
            <person name="Ambesi-Impiombato A."/>
            <person name="Apweiler R."/>
            <person name="Aturaliya R.N."/>
            <person name="Bailey T.L."/>
            <person name="Bansal M."/>
            <person name="Baxter L."/>
            <person name="Beisel K.W."/>
            <person name="Bersano T."/>
            <person name="Bono H."/>
            <person name="Chalk A.M."/>
            <person name="Chiu K.P."/>
            <person name="Choudhary V."/>
            <person name="Christoffels A."/>
            <person name="Clutterbuck D.R."/>
            <person name="Crowe M.L."/>
            <person name="Dalla E."/>
            <person name="Dalrymple B.P."/>
            <person name="de Bono B."/>
            <person name="Della Gatta G."/>
            <person name="di Bernardo D."/>
            <person name="Down T."/>
            <person name="Engstrom P."/>
            <person name="Fagiolini M."/>
            <person name="Faulkner G."/>
            <person name="Fletcher C.F."/>
            <person name="Fukushima T."/>
            <person name="Furuno M."/>
            <person name="Futaki S."/>
            <person name="Gariboldi M."/>
            <person name="Georgii-Hemming P."/>
            <person name="Gingeras T.R."/>
            <person name="Gojobori T."/>
            <person name="Green R.E."/>
            <person name="Gustincich S."/>
            <person name="Harbers M."/>
            <person name="Hayashi Y."/>
            <person name="Hensch T.K."/>
            <person name="Hirokawa N."/>
            <person name="Hill D."/>
            <person name="Huminiecki L."/>
            <person name="Iacono M."/>
            <person name="Ikeo K."/>
            <person name="Iwama A."/>
            <person name="Ishikawa T."/>
            <person name="Jakt M."/>
            <person name="Kanapin A."/>
            <person name="Katoh M."/>
            <person name="Kawasawa Y."/>
            <person name="Kelso J."/>
            <person name="Kitamura H."/>
            <person name="Kitano H."/>
            <person name="Kollias G."/>
            <person name="Krishnan S.P."/>
            <person name="Kruger A."/>
            <person name="Kummerfeld S.K."/>
            <person name="Kurochkin I.V."/>
            <person name="Lareau L.F."/>
            <person name="Lazarevic D."/>
            <person name="Lipovich L."/>
            <person name="Liu J."/>
            <person name="Liuni S."/>
            <person name="McWilliam S."/>
            <person name="Madan Babu M."/>
            <person name="Madera M."/>
            <person name="Marchionni L."/>
            <person name="Matsuda H."/>
            <person name="Matsuzawa S."/>
            <person name="Miki H."/>
            <person name="Mignone F."/>
            <person name="Miyake S."/>
            <person name="Morris K."/>
            <person name="Mottagui-Tabar S."/>
            <person name="Mulder N."/>
            <person name="Nakano N."/>
            <person name="Nakauchi H."/>
            <person name="Ng P."/>
            <person name="Nilsson R."/>
            <person name="Nishiguchi S."/>
            <person name="Nishikawa S."/>
            <person name="Nori F."/>
            <person name="Ohara O."/>
            <person name="Okazaki Y."/>
            <person name="Orlando V."/>
            <person name="Pang K.C."/>
            <person name="Pavan W.J."/>
            <person name="Pavesi G."/>
            <person name="Pesole G."/>
            <person name="Petrovsky N."/>
            <person name="Piazza S."/>
            <person name="Reed J."/>
            <person name="Reid J.F."/>
            <person name="Ring B.Z."/>
            <person name="Ringwald M."/>
            <person name="Rost B."/>
            <person name="Ruan Y."/>
            <person name="Salzberg S.L."/>
            <person name="Sandelin A."/>
            <person name="Schneider C."/>
            <person name="Schoenbach C."/>
            <person name="Sekiguchi K."/>
            <person name="Semple C.A."/>
            <person name="Seno S."/>
            <person name="Sessa L."/>
            <person name="Sheng Y."/>
            <person name="Shibata Y."/>
            <person name="Shimada H."/>
            <person name="Shimada K."/>
            <person name="Silva D."/>
            <person name="Sinclair B."/>
            <person name="Sperling S."/>
            <person name="Stupka E."/>
            <person name="Sugiura K."/>
            <person name="Sultana R."/>
            <person name="Takenaka Y."/>
            <person name="Taki K."/>
            <person name="Tammoja K."/>
            <person name="Tan S.L."/>
            <person name="Tang S."/>
            <person name="Taylor M.S."/>
            <person name="Tegner J."/>
            <person name="Teichmann S.A."/>
            <person name="Ueda H.R."/>
            <person name="van Nimwegen E."/>
            <person name="Verardo R."/>
            <person name="Wei C.L."/>
            <person name="Yagi K."/>
            <person name="Yamanishi H."/>
            <person name="Zabarovsky E."/>
            <person name="Zhu S."/>
            <person name="Zimmer A."/>
            <person name="Hide W."/>
            <person name="Bult C."/>
            <person name="Grimmond S.M."/>
            <person name="Teasdale R.D."/>
            <person name="Liu E.T."/>
            <person name="Brusic V."/>
            <person name="Quackenbush J."/>
            <person name="Wahlestedt C."/>
            <person name="Mattick J.S."/>
            <person name="Hume D.A."/>
            <person name="Kai C."/>
            <person name="Sasaki D."/>
            <person name="Tomaru Y."/>
            <person name="Fukuda S."/>
            <person name="Kanamori-Katayama M."/>
            <person name="Suzuki M."/>
            <person name="Aoki J."/>
            <person name="Arakawa T."/>
            <person name="Iida J."/>
            <person name="Imamura K."/>
            <person name="Itoh M."/>
            <person name="Kato T."/>
            <person name="Kawaji H."/>
            <person name="Kawagashira N."/>
            <person name="Kawashima T."/>
            <person name="Kojima M."/>
            <person name="Kondo S."/>
            <person name="Konno H."/>
            <person name="Nakano K."/>
            <person name="Ninomiya N."/>
            <person name="Nishio T."/>
            <person name="Okada M."/>
            <person name="Plessy C."/>
            <person name="Shibata K."/>
            <person name="Shiraki T."/>
            <person name="Suzuki S."/>
            <person name="Tagami M."/>
            <person name="Waki K."/>
            <person name="Watahiki A."/>
            <person name="Okamura-Oho Y."/>
            <person name="Suzuki H."/>
            <person name="Kawai J."/>
            <person name="Hayashizaki Y."/>
        </authorList>
    </citation>
    <scope>NUCLEOTIDE SEQUENCE [LARGE SCALE MRNA]</scope>
    <source>
        <strain>C57BL/6J</strain>
        <strain>NOD</strain>
        <tissue>Embryo</tissue>
    </source>
</reference>
<reference key="2">
    <citation type="journal article" date="2004" name="Genome Res.">
        <title>The status, quality, and expansion of the NIH full-length cDNA project: the Mammalian Gene Collection (MGC).</title>
        <authorList>
            <consortium name="The MGC Project Team"/>
        </authorList>
    </citation>
    <scope>NUCLEOTIDE SEQUENCE [LARGE SCALE MRNA]</scope>
    <source>
        <tissue>Mammary tumor</tissue>
    </source>
</reference>
<comment type="similarity">
    <text evidence="3">Belongs to the ELL/occludin family.</text>
</comment>
<protein>
    <recommendedName>
        <fullName>Occludin/ELL domain-containing protein 1</fullName>
    </recommendedName>
</protein>
<name>OCEL1_MOUSE</name>
<organism>
    <name type="scientific">Mus musculus</name>
    <name type="common">Mouse</name>
    <dbReference type="NCBI Taxonomy" id="10090"/>
    <lineage>
        <taxon>Eukaryota</taxon>
        <taxon>Metazoa</taxon>
        <taxon>Chordata</taxon>
        <taxon>Craniata</taxon>
        <taxon>Vertebrata</taxon>
        <taxon>Euteleostomi</taxon>
        <taxon>Mammalia</taxon>
        <taxon>Eutheria</taxon>
        <taxon>Euarchontoglires</taxon>
        <taxon>Glires</taxon>
        <taxon>Rodentia</taxon>
        <taxon>Myomorpha</taxon>
        <taxon>Muroidea</taxon>
        <taxon>Muridae</taxon>
        <taxon>Murinae</taxon>
        <taxon>Mus</taxon>
        <taxon>Mus</taxon>
    </lineage>
</organism>
<proteinExistence type="evidence at transcript level"/>
<sequence>MQIHAGPASRRGRRGPLARLSGPEATCNSRPAARGRQRAAAPRMPAPERPRSRRPQSQPGPGELCVKPRKIVFADELRPREPLHPEKHPRDLGPRLNPVPDYELKYPPVTNRRDRSRYAAVFQDQYGEFSELQREVGATQAKLQQLEALLLSLPPPRSQKEARMAAHVRREFEKKRVDPGFLDKQARCNYLKGKLRHLKAQIRKFDDQQDSNSEDSVYF</sequence>
<accession>Q8VCR9</accession>
<accession>Q3U2L0</accession>
<accession>Q9CX17</accession>
<gene>
    <name type="primary">Ocel1</name>
</gene>
<dbReference type="EMBL" id="AK020528">
    <property type="protein sequence ID" value="BAB32126.1"/>
    <property type="molecule type" value="mRNA"/>
</dbReference>
<dbReference type="EMBL" id="AK155219">
    <property type="protein sequence ID" value="BAE33130.1"/>
    <property type="molecule type" value="mRNA"/>
</dbReference>
<dbReference type="EMBL" id="BC019407">
    <property type="protein sequence ID" value="AAH19407.1"/>
    <property type="molecule type" value="mRNA"/>
</dbReference>
<dbReference type="CCDS" id="CCDS22391.1"/>
<dbReference type="RefSeq" id="NP_084141.2">
    <property type="nucleotide sequence ID" value="NM_029865.2"/>
</dbReference>
<dbReference type="SMR" id="Q8VCR9"/>
<dbReference type="FunCoup" id="Q8VCR9">
    <property type="interactions" value="4"/>
</dbReference>
<dbReference type="STRING" id="10090.ENSMUSP00000002469"/>
<dbReference type="PhosphoSitePlus" id="Q8VCR9"/>
<dbReference type="PaxDb" id="10090-ENSMUSP00000002469"/>
<dbReference type="DNASU" id="77090"/>
<dbReference type="GeneID" id="77090"/>
<dbReference type="KEGG" id="mmu:77090"/>
<dbReference type="AGR" id="MGI:1924340"/>
<dbReference type="CTD" id="79629"/>
<dbReference type="MGI" id="MGI:1924340">
    <property type="gene designation" value="Ocel1"/>
</dbReference>
<dbReference type="eggNOG" id="KOG4796">
    <property type="taxonomic scope" value="Eukaryota"/>
</dbReference>
<dbReference type="InParanoid" id="Q8VCR9"/>
<dbReference type="OrthoDB" id="9445081at2759"/>
<dbReference type="PhylomeDB" id="Q8VCR9"/>
<dbReference type="BioGRID-ORCS" id="77090">
    <property type="hits" value="3 hits in 76 CRISPR screens"/>
</dbReference>
<dbReference type="ChiTaRS" id="Ocel1">
    <property type="organism name" value="mouse"/>
</dbReference>
<dbReference type="PRO" id="PR:Q8VCR9"/>
<dbReference type="Proteomes" id="UP000000589">
    <property type="component" value="Unplaced"/>
</dbReference>
<dbReference type="RNAct" id="Q8VCR9">
    <property type="molecule type" value="protein"/>
</dbReference>
<dbReference type="Gene3D" id="6.10.140.340">
    <property type="match status" value="1"/>
</dbReference>
<dbReference type="InterPro" id="IPR031176">
    <property type="entry name" value="ELL/occludin"/>
</dbReference>
<dbReference type="InterPro" id="IPR010844">
    <property type="entry name" value="Occludin_ELL"/>
</dbReference>
<dbReference type="PANTHER" id="PTHR23288">
    <property type="entry name" value="OCCLUDIN AND RNA POLYMERASE II ELONGATION FACTOR ELL"/>
    <property type="match status" value="1"/>
</dbReference>
<dbReference type="PANTHER" id="PTHR23288:SF15">
    <property type="entry name" value="OCCLUDIN_ELL DOMAIN-CONTAINING PROTEIN 1"/>
    <property type="match status" value="1"/>
</dbReference>
<dbReference type="Pfam" id="PF07303">
    <property type="entry name" value="Occludin_ELL"/>
    <property type="match status" value="1"/>
</dbReference>
<dbReference type="SUPFAM" id="SSF144292">
    <property type="entry name" value="occludin/ELL-like"/>
    <property type="match status" value="1"/>
</dbReference>
<dbReference type="PROSITE" id="PS51980">
    <property type="entry name" value="OCEL"/>
    <property type="match status" value="1"/>
</dbReference>
<feature type="chain" id="PRO_0000271532" description="Occludin/ELL domain-containing protein 1">
    <location>
        <begin position="1"/>
        <end position="219"/>
    </location>
</feature>
<feature type="domain" description="OCEL" evidence="1">
    <location>
        <begin position="100"/>
        <end position="210"/>
    </location>
</feature>
<feature type="region of interest" description="Disordered" evidence="2">
    <location>
        <begin position="1"/>
        <end position="110"/>
    </location>
</feature>
<feature type="compositionally biased region" description="Low complexity" evidence="2">
    <location>
        <begin position="17"/>
        <end position="43"/>
    </location>
</feature>
<feature type="compositionally biased region" description="Basic and acidic residues" evidence="2">
    <location>
        <begin position="72"/>
        <end position="93"/>
    </location>
</feature>
<feature type="sequence conflict" description="In Ref. 1; BAE33130/BAB32126." evidence="3" ref="1">
    <original>K</original>
    <variation>R</variation>
    <location>
        <position position="67"/>
    </location>
</feature>
<feature type="sequence conflict" description="In Ref. 1; BAB32126." evidence="3" ref="1">
    <original>F</original>
    <variation>L</variation>
    <location>
        <position position="172"/>
    </location>
</feature>
<feature type="sequence conflict" description="In Ref. 1; BAE33130/BAB32126." evidence="3" ref="1">
    <original>V</original>
    <variation>G</variation>
    <location>
        <position position="177"/>
    </location>
</feature>
<feature type="sequence conflict" description="In Ref. 1; BAE33130." evidence="3" ref="1">
    <original>Y</original>
    <variation>C</variation>
    <location>
        <position position="190"/>
    </location>
</feature>
<evidence type="ECO:0000255" key="1">
    <source>
        <dbReference type="PROSITE-ProRule" id="PRU01324"/>
    </source>
</evidence>
<evidence type="ECO:0000256" key="2">
    <source>
        <dbReference type="SAM" id="MobiDB-lite"/>
    </source>
</evidence>
<evidence type="ECO:0000305" key="3"/>